<protein>
    <recommendedName>
        <fullName evidence="1">DNA repair protein RecO</fullName>
    </recommendedName>
    <alternativeName>
        <fullName evidence="1">Recombination protein O</fullName>
    </alternativeName>
</protein>
<reference key="1">
    <citation type="journal article" date="2004" name="PLoS Biol.">
        <title>Phylogenomics of the reproductive parasite Wolbachia pipientis wMel: a streamlined genome overrun by mobile genetic elements.</title>
        <authorList>
            <person name="Wu M."/>
            <person name="Sun L.V."/>
            <person name="Vamathevan J.J."/>
            <person name="Riegler M."/>
            <person name="DeBoy R.T."/>
            <person name="Brownlie J.C."/>
            <person name="McGraw E.A."/>
            <person name="Martin W."/>
            <person name="Esser C."/>
            <person name="Ahmadinejad N."/>
            <person name="Wiegand C."/>
            <person name="Madupu R."/>
            <person name="Beanan M.J."/>
            <person name="Brinkac L.M."/>
            <person name="Daugherty S.C."/>
            <person name="Durkin A.S."/>
            <person name="Kolonay J.F."/>
            <person name="Nelson W.C."/>
            <person name="Mohamoud Y."/>
            <person name="Lee P."/>
            <person name="Berry K.J."/>
            <person name="Young M.B."/>
            <person name="Utterback T.R."/>
            <person name="Weidman J.F."/>
            <person name="Nierman W.C."/>
            <person name="Paulsen I.T."/>
            <person name="Nelson K.E."/>
            <person name="Tettelin H."/>
            <person name="O'Neill S.L."/>
            <person name="Eisen J.A."/>
        </authorList>
    </citation>
    <scope>NUCLEOTIDE SEQUENCE [LARGE SCALE GENOMIC DNA]</scope>
</reference>
<dbReference type="EMBL" id="AE017196">
    <property type="protein sequence ID" value="AAS13963.1"/>
    <property type="molecule type" value="Genomic_DNA"/>
</dbReference>
<dbReference type="RefSeq" id="WP_010962439.1">
    <property type="nucleotide sequence ID" value="NZ_CP046925.1"/>
</dbReference>
<dbReference type="SMR" id="Q73IE9"/>
<dbReference type="EnsemblBacteria" id="AAS13963">
    <property type="protein sequence ID" value="AAS13963"/>
    <property type="gene ID" value="WD_0219"/>
</dbReference>
<dbReference type="GeneID" id="70035710"/>
<dbReference type="KEGG" id="wol:WD_0219"/>
<dbReference type="eggNOG" id="COG1381">
    <property type="taxonomic scope" value="Bacteria"/>
</dbReference>
<dbReference type="Proteomes" id="UP000008215">
    <property type="component" value="Chromosome"/>
</dbReference>
<dbReference type="GO" id="GO:0043590">
    <property type="term" value="C:bacterial nucleoid"/>
    <property type="evidence" value="ECO:0007669"/>
    <property type="project" value="TreeGrafter"/>
</dbReference>
<dbReference type="GO" id="GO:0006310">
    <property type="term" value="P:DNA recombination"/>
    <property type="evidence" value="ECO:0007669"/>
    <property type="project" value="UniProtKB-UniRule"/>
</dbReference>
<dbReference type="GO" id="GO:0006302">
    <property type="term" value="P:double-strand break repair"/>
    <property type="evidence" value="ECO:0007669"/>
    <property type="project" value="TreeGrafter"/>
</dbReference>
<dbReference type="Gene3D" id="2.40.50.140">
    <property type="entry name" value="Nucleic acid-binding proteins"/>
    <property type="match status" value="1"/>
</dbReference>
<dbReference type="Gene3D" id="1.20.1440.120">
    <property type="entry name" value="Recombination protein O, C-terminal domain"/>
    <property type="match status" value="1"/>
</dbReference>
<dbReference type="HAMAP" id="MF_00201">
    <property type="entry name" value="RecO"/>
    <property type="match status" value="1"/>
</dbReference>
<dbReference type="InterPro" id="IPR037278">
    <property type="entry name" value="ARFGAP/RecO"/>
</dbReference>
<dbReference type="InterPro" id="IPR022572">
    <property type="entry name" value="DNA_rep/recomb_RecO_N"/>
</dbReference>
<dbReference type="InterPro" id="IPR012340">
    <property type="entry name" value="NA-bd_OB-fold"/>
</dbReference>
<dbReference type="InterPro" id="IPR003717">
    <property type="entry name" value="RecO"/>
</dbReference>
<dbReference type="InterPro" id="IPR042242">
    <property type="entry name" value="RecO_C"/>
</dbReference>
<dbReference type="NCBIfam" id="TIGR00613">
    <property type="entry name" value="reco"/>
    <property type="match status" value="1"/>
</dbReference>
<dbReference type="PANTHER" id="PTHR33991">
    <property type="entry name" value="DNA REPAIR PROTEIN RECO"/>
    <property type="match status" value="1"/>
</dbReference>
<dbReference type="PANTHER" id="PTHR33991:SF1">
    <property type="entry name" value="DNA REPAIR PROTEIN RECO"/>
    <property type="match status" value="1"/>
</dbReference>
<dbReference type="Pfam" id="PF02565">
    <property type="entry name" value="RecO_C"/>
    <property type="match status" value="1"/>
</dbReference>
<dbReference type="Pfam" id="PF11967">
    <property type="entry name" value="RecO_N"/>
    <property type="match status" value="1"/>
</dbReference>
<dbReference type="SUPFAM" id="SSF57863">
    <property type="entry name" value="ArfGap/RecO-like zinc finger"/>
    <property type="match status" value="1"/>
</dbReference>
<sequence length="240" mass="27949">MRWKDEGIIIAAKKYGDKNLILSLFTKNHGKRRGLTKLTNNSNYKFQISNLLHAEWSAKLPENLGFLKCELIESPFHHFFQDRLKSITIVSFSSILEKVLPESEPCAMLYDNLRYFIDVIKHNNQSWQSHYLNLELLLLTQLGFKLDLSKCAVTGVKENLQFISPKTGRAVSKKVGDYYADKLLPFPQMLHDVYNNNLQNSYSFQEFQLGLKVTGYFLNKYLFLQLNVKFPELRNLMLSL</sequence>
<keyword id="KW-0227">DNA damage</keyword>
<keyword id="KW-0233">DNA recombination</keyword>
<keyword id="KW-0234">DNA repair</keyword>
<accession>Q73IE9</accession>
<feature type="chain" id="PRO_1000193434" description="DNA repair protein RecO">
    <location>
        <begin position="1"/>
        <end position="240"/>
    </location>
</feature>
<comment type="function">
    <text evidence="1">Involved in DNA repair and RecF pathway recombination.</text>
</comment>
<comment type="similarity">
    <text evidence="1">Belongs to the RecO family.</text>
</comment>
<evidence type="ECO:0000255" key="1">
    <source>
        <dbReference type="HAMAP-Rule" id="MF_00201"/>
    </source>
</evidence>
<proteinExistence type="inferred from homology"/>
<name>RECO_WOLPM</name>
<organism>
    <name type="scientific">Wolbachia pipientis wMel</name>
    <dbReference type="NCBI Taxonomy" id="163164"/>
    <lineage>
        <taxon>Bacteria</taxon>
        <taxon>Pseudomonadati</taxon>
        <taxon>Pseudomonadota</taxon>
        <taxon>Alphaproteobacteria</taxon>
        <taxon>Rickettsiales</taxon>
        <taxon>Anaplasmataceae</taxon>
        <taxon>Wolbachieae</taxon>
        <taxon>Wolbachia</taxon>
    </lineage>
</organism>
<gene>
    <name evidence="1" type="primary">recO</name>
    <name type="ordered locus">WD_0219</name>
</gene>